<comment type="function">
    <text evidence="1">Produces ATP from ADP in the presence of a proton gradient across the membrane. The catalytic sites are hosted primarily by the beta subunits.</text>
</comment>
<comment type="catalytic activity">
    <reaction evidence="1">
        <text>ATP + H2O + 4 H(+)(in) = ADP + phosphate + 5 H(+)(out)</text>
        <dbReference type="Rhea" id="RHEA:57720"/>
        <dbReference type="ChEBI" id="CHEBI:15377"/>
        <dbReference type="ChEBI" id="CHEBI:15378"/>
        <dbReference type="ChEBI" id="CHEBI:30616"/>
        <dbReference type="ChEBI" id="CHEBI:43474"/>
        <dbReference type="ChEBI" id="CHEBI:456216"/>
        <dbReference type="EC" id="7.1.2.2"/>
    </reaction>
</comment>
<comment type="subunit">
    <text evidence="1">F-type ATPases have 2 components, CF(1) - the catalytic core - and CF(0) - the membrane proton channel. CF(1) has five subunits: alpha(3), beta(3), gamma(1), delta(1), epsilon(1). CF(0) has three main subunits: a(1), b(2) and c(9-12). The alpha and beta chains form an alternating ring which encloses part of the gamma chain. CF(1) is attached to CF(0) by a central stalk formed by the gamma and epsilon chains, while a peripheral stalk is formed by the delta and b chains.</text>
</comment>
<comment type="subcellular location">
    <subcellularLocation>
        <location evidence="1">Cell inner membrane</location>
        <topology evidence="1">Peripheral membrane protein</topology>
    </subcellularLocation>
</comment>
<comment type="similarity">
    <text evidence="1">Belongs to the ATPase alpha/beta chains family.</text>
</comment>
<evidence type="ECO:0000255" key="1">
    <source>
        <dbReference type="HAMAP-Rule" id="MF_01347"/>
    </source>
</evidence>
<accession>A5WBA3</accession>
<reference key="1">
    <citation type="submission" date="2007-05" db="EMBL/GenBank/DDBJ databases">
        <title>Complete sequence of Pseudomonas putida F1.</title>
        <authorList>
            <consortium name="US DOE Joint Genome Institute"/>
            <person name="Copeland A."/>
            <person name="Lucas S."/>
            <person name="Lapidus A."/>
            <person name="Barry K."/>
            <person name="Detter J.C."/>
            <person name="Glavina del Rio T."/>
            <person name="Hammon N."/>
            <person name="Israni S."/>
            <person name="Dalin E."/>
            <person name="Tice H."/>
            <person name="Pitluck S."/>
            <person name="Chain P."/>
            <person name="Malfatti S."/>
            <person name="Shin M."/>
            <person name="Vergez L."/>
            <person name="Schmutz J."/>
            <person name="Larimer F."/>
            <person name="Land M."/>
            <person name="Hauser L."/>
            <person name="Kyrpides N."/>
            <person name="Lykidis A."/>
            <person name="Parales R."/>
            <person name="Richardson P."/>
        </authorList>
    </citation>
    <scope>NUCLEOTIDE SEQUENCE [LARGE SCALE GENOMIC DNA]</scope>
    <source>
        <strain>ATCC 700007 / DSM 6899 / JCM 31910 / BCRC 17059 / LMG 24140 / F1</strain>
    </source>
</reference>
<feature type="chain" id="PRO_1000067730" description="ATP synthase subunit beta">
    <location>
        <begin position="1"/>
        <end position="458"/>
    </location>
</feature>
<feature type="binding site" evidence="1">
    <location>
        <begin position="148"/>
        <end position="155"/>
    </location>
    <ligand>
        <name>ATP</name>
        <dbReference type="ChEBI" id="CHEBI:30616"/>
    </ligand>
</feature>
<proteinExistence type="inferred from homology"/>
<organism>
    <name type="scientific">Pseudomonas putida (strain ATCC 700007 / DSM 6899 / JCM 31910 / BCRC 17059 / LMG 24140 / F1)</name>
    <dbReference type="NCBI Taxonomy" id="351746"/>
    <lineage>
        <taxon>Bacteria</taxon>
        <taxon>Pseudomonadati</taxon>
        <taxon>Pseudomonadota</taxon>
        <taxon>Gammaproteobacteria</taxon>
        <taxon>Pseudomonadales</taxon>
        <taxon>Pseudomonadaceae</taxon>
        <taxon>Pseudomonas</taxon>
    </lineage>
</organism>
<keyword id="KW-0066">ATP synthesis</keyword>
<keyword id="KW-0067">ATP-binding</keyword>
<keyword id="KW-0997">Cell inner membrane</keyword>
<keyword id="KW-1003">Cell membrane</keyword>
<keyword id="KW-0139">CF(1)</keyword>
<keyword id="KW-0375">Hydrogen ion transport</keyword>
<keyword id="KW-0406">Ion transport</keyword>
<keyword id="KW-0472">Membrane</keyword>
<keyword id="KW-0547">Nucleotide-binding</keyword>
<keyword id="KW-1278">Translocase</keyword>
<keyword id="KW-0813">Transport</keyword>
<sequence length="458" mass="49359">MSSGRIVQIIGAVIDVEFPRDVVPSVYNALKVQGAETTLEVQQQLGDGVVRTIAMGSTEGLKRGLDVVDTGAAISVPVGKATLGRIMDVLGNPIDEAGPIGEEERRGIHQPAPSFADQAGGNDLLETGIKVIDLVCPFAKGGKVGLFGGAGVGKTVNMMELIRNIAMEHSGYSVFAGVGERTREGNDFYHEMKDSNVLDKVALVYGQMNEPPGNRLRVALTGLTMAEKFRDEGNDVLLFVDNIYRYTLAGTEVSALLGRMPSAVGYQPTLAEEMGVLQERITSTKEGSITSVQAVYVPADDLTDPSPATTFAHLDATVVLSRDIASLGIYPAVDPLDSTSRQLDPNVIGNEHYETARGVQYVLQRYKELKDIIAILGMDELSEADKQLVARARKIQRFLSQPFFVAEVFTGSPGKYVSLKDTIAGFSGILKGDYDHLPEQAFYMVGSIDEAIEKAKKL</sequence>
<gene>
    <name evidence="1" type="primary">atpD</name>
    <name type="ordered locus">Pput_5295</name>
</gene>
<dbReference type="EC" id="7.1.2.2" evidence="1"/>
<dbReference type="EMBL" id="CP000712">
    <property type="protein sequence ID" value="ABQ81413.1"/>
    <property type="molecule type" value="Genomic_DNA"/>
</dbReference>
<dbReference type="SMR" id="A5WBA3"/>
<dbReference type="KEGG" id="ppf:Pput_5295"/>
<dbReference type="eggNOG" id="COG0055">
    <property type="taxonomic scope" value="Bacteria"/>
</dbReference>
<dbReference type="HOGENOM" id="CLU_022398_0_2_6"/>
<dbReference type="GO" id="GO:0005886">
    <property type="term" value="C:plasma membrane"/>
    <property type="evidence" value="ECO:0007669"/>
    <property type="project" value="UniProtKB-SubCell"/>
</dbReference>
<dbReference type="GO" id="GO:0045259">
    <property type="term" value="C:proton-transporting ATP synthase complex"/>
    <property type="evidence" value="ECO:0007669"/>
    <property type="project" value="UniProtKB-KW"/>
</dbReference>
<dbReference type="GO" id="GO:0005524">
    <property type="term" value="F:ATP binding"/>
    <property type="evidence" value="ECO:0007669"/>
    <property type="project" value="UniProtKB-UniRule"/>
</dbReference>
<dbReference type="GO" id="GO:0016887">
    <property type="term" value="F:ATP hydrolysis activity"/>
    <property type="evidence" value="ECO:0007669"/>
    <property type="project" value="InterPro"/>
</dbReference>
<dbReference type="GO" id="GO:0046933">
    <property type="term" value="F:proton-transporting ATP synthase activity, rotational mechanism"/>
    <property type="evidence" value="ECO:0007669"/>
    <property type="project" value="UniProtKB-UniRule"/>
</dbReference>
<dbReference type="CDD" id="cd18110">
    <property type="entry name" value="ATP-synt_F1_beta_C"/>
    <property type="match status" value="1"/>
</dbReference>
<dbReference type="CDD" id="cd18115">
    <property type="entry name" value="ATP-synt_F1_beta_N"/>
    <property type="match status" value="1"/>
</dbReference>
<dbReference type="CDD" id="cd01133">
    <property type="entry name" value="F1-ATPase_beta_CD"/>
    <property type="match status" value="1"/>
</dbReference>
<dbReference type="FunFam" id="1.10.1140.10:FF:000001">
    <property type="entry name" value="ATP synthase subunit beta"/>
    <property type="match status" value="1"/>
</dbReference>
<dbReference type="FunFam" id="3.40.50.300:FF:000004">
    <property type="entry name" value="ATP synthase subunit beta"/>
    <property type="match status" value="1"/>
</dbReference>
<dbReference type="Gene3D" id="2.40.10.170">
    <property type="match status" value="1"/>
</dbReference>
<dbReference type="Gene3D" id="1.10.1140.10">
    <property type="entry name" value="Bovine Mitochondrial F1-atpase, Atp Synthase Beta Chain, Chain D, domain 3"/>
    <property type="match status" value="1"/>
</dbReference>
<dbReference type="Gene3D" id="3.40.50.300">
    <property type="entry name" value="P-loop containing nucleotide triphosphate hydrolases"/>
    <property type="match status" value="1"/>
</dbReference>
<dbReference type="HAMAP" id="MF_01347">
    <property type="entry name" value="ATP_synth_beta_bact"/>
    <property type="match status" value="1"/>
</dbReference>
<dbReference type="InterPro" id="IPR003593">
    <property type="entry name" value="AAA+_ATPase"/>
</dbReference>
<dbReference type="InterPro" id="IPR055190">
    <property type="entry name" value="ATP-synt_VA_C"/>
</dbReference>
<dbReference type="InterPro" id="IPR005722">
    <property type="entry name" value="ATP_synth_F1_bsu"/>
</dbReference>
<dbReference type="InterPro" id="IPR020003">
    <property type="entry name" value="ATPase_a/bsu_AS"/>
</dbReference>
<dbReference type="InterPro" id="IPR050053">
    <property type="entry name" value="ATPase_alpha/beta_chains"/>
</dbReference>
<dbReference type="InterPro" id="IPR004100">
    <property type="entry name" value="ATPase_F1/V1/A1_a/bsu_N"/>
</dbReference>
<dbReference type="InterPro" id="IPR036121">
    <property type="entry name" value="ATPase_F1/V1/A1_a/bsu_N_sf"/>
</dbReference>
<dbReference type="InterPro" id="IPR000194">
    <property type="entry name" value="ATPase_F1/V1/A1_a/bsu_nucl-bd"/>
</dbReference>
<dbReference type="InterPro" id="IPR024034">
    <property type="entry name" value="ATPase_F1/V1_b/a_C"/>
</dbReference>
<dbReference type="InterPro" id="IPR027417">
    <property type="entry name" value="P-loop_NTPase"/>
</dbReference>
<dbReference type="NCBIfam" id="TIGR01039">
    <property type="entry name" value="atpD"/>
    <property type="match status" value="1"/>
</dbReference>
<dbReference type="PANTHER" id="PTHR15184">
    <property type="entry name" value="ATP SYNTHASE"/>
    <property type="match status" value="1"/>
</dbReference>
<dbReference type="PANTHER" id="PTHR15184:SF71">
    <property type="entry name" value="ATP SYNTHASE SUBUNIT BETA, MITOCHONDRIAL"/>
    <property type="match status" value="1"/>
</dbReference>
<dbReference type="Pfam" id="PF00006">
    <property type="entry name" value="ATP-synt_ab"/>
    <property type="match status" value="1"/>
</dbReference>
<dbReference type="Pfam" id="PF02874">
    <property type="entry name" value="ATP-synt_ab_N"/>
    <property type="match status" value="1"/>
</dbReference>
<dbReference type="Pfam" id="PF22919">
    <property type="entry name" value="ATP-synt_VA_C"/>
    <property type="match status" value="1"/>
</dbReference>
<dbReference type="SMART" id="SM00382">
    <property type="entry name" value="AAA"/>
    <property type="match status" value="1"/>
</dbReference>
<dbReference type="SUPFAM" id="SSF47917">
    <property type="entry name" value="C-terminal domain of alpha and beta subunits of F1 ATP synthase"/>
    <property type="match status" value="1"/>
</dbReference>
<dbReference type="SUPFAM" id="SSF50615">
    <property type="entry name" value="N-terminal domain of alpha and beta subunits of F1 ATP synthase"/>
    <property type="match status" value="1"/>
</dbReference>
<dbReference type="SUPFAM" id="SSF52540">
    <property type="entry name" value="P-loop containing nucleoside triphosphate hydrolases"/>
    <property type="match status" value="1"/>
</dbReference>
<dbReference type="PROSITE" id="PS00152">
    <property type="entry name" value="ATPASE_ALPHA_BETA"/>
    <property type="match status" value="1"/>
</dbReference>
<protein>
    <recommendedName>
        <fullName evidence="1">ATP synthase subunit beta</fullName>
        <ecNumber evidence="1">7.1.2.2</ecNumber>
    </recommendedName>
    <alternativeName>
        <fullName evidence="1">ATP synthase F1 sector subunit beta</fullName>
    </alternativeName>
    <alternativeName>
        <fullName evidence="1">F-ATPase subunit beta</fullName>
    </alternativeName>
</protein>
<name>ATPB_PSEP1</name>